<proteinExistence type="evidence at protein level"/>
<reference key="1">
    <citation type="journal article" date="2002" name="J. Biol. Chem.">
        <title>Tamapin, a venom peptide from the Indian red scorpion (Mesobuthus tamulus) that targets small conductance Ca2+-activated K+ channels and afterhyperpolarization currents in central neurons.</title>
        <authorList>
            <person name="Pedarzani P."/>
            <person name="D'hoedt D."/>
            <person name="Doorty K.B."/>
            <person name="Wadsworth J.D.F."/>
            <person name="Joseph J.S."/>
            <person name="Jeyaseelan K."/>
            <person name="Kini R.M."/>
            <person name="Gadre S.V."/>
            <person name="Sapatnekar S.M."/>
            <person name="Stocker M."/>
            <person name="Strong P.N."/>
        </authorList>
    </citation>
    <scope>PROTEIN SEQUENCE</scope>
    <scope>AMIDATION AT HIS-31</scope>
    <scope>MASS SPECTROMETRY</scope>
    <scope>FUNCTION</scope>
    <source>
        <tissue>Venom</tissue>
    </source>
</reference>
<keyword id="KW-0027">Amidation</keyword>
<keyword id="KW-1221">Calcium-activated potassium channel impairing toxin</keyword>
<keyword id="KW-0903">Direct protein sequencing</keyword>
<keyword id="KW-1015">Disulfide bond</keyword>
<keyword id="KW-0872">Ion channel impairing toxin</keyword>
<keyword id="KW-0528">Neurotoxin</keyword>
<keyword id="KW-0632">Potassium channel impairing toxin</keyword>
<keyword id="KW-0964">Secreted</keyword>
<keyword id="KW-0800">Toxin</keyword>
<sequence length="31" mass="3439">AFCNLRRCELSCRSLGLLGKCIGEECKCVPH</sequence>
<feature type="peptide" id="PRO_0000044931" description="Potassium channel toxin alpha-KTx 5.5">
    <location>
        <begin position="1"/>
        <end position="31"/>
    </location>
</feature>
<feature type="region of interest" description="[R/K]XCQ motif" evidence="3">
    <location>
        <begin position="6"/>
        <end position="9"/>
    </location>
</feature>
<feature type="modified residue" description="Histidine amide" evidence="4">
    <location>
        <position position="31"/>
    </location>
</feature>
<feature type="disulfide bond" evidence="1">
    <location>
        <begin position="3"/>
        <end position="21"/>
    </location>
</feature>
<feature type="disulfide bond" evidence="1">
    <location>
        <begin position="8"/>
        <end position="26"/>
    </location>
</feature>
<feature type="disulfide bond" evidence="1">
    <location>
        <begin position="12"/>
        <end position="28"/>
    </location>
</feature>
<dbReference type="BMRB" id="P59870"/>
<dbReference type="SMR" id="P59870"/>
<dbReference type="GO" id="GO:0005576">
    <property type="term" value="C:extracellular region"/>
    <property type="evidence" value="ECO:0007669"/>
    <property type="project" value="UniProtKB-SubCell"/>
</dbReference>
<dbReference type="GO" id="GO:0008200">
    <property type="term" value="F:ion channel inhibitor activity"/>
    <property type="evidence" value="ECO:0007669"/>
    <property type="project" value="InterPro"/>
</dbReference>
<dbReference type="GO" id="GO:0015459">
    <property type="term" value="F:potassium channel regulator activity"/>
    <property type="evidence" value="ECO:0007669"/>
    <property type="project" value="UniProtKB-KW"/>
</dbReference>
<dbReference type="GO" id="GO:0090729">
    <property type="term" value="F:toxin activity"/>
    <property type="evidence" value="ECO:0007669"/>
    <property type="project" value="UniProtKB-KW"/>
</dbReference>
<dbReference type="InterPro" id="IPR036574">
    <property type="entry name" value="Scorpion_toxin-like_sf"/>
</dbReference>
<dbReference type="InterPro" id="IPR001947">
    <property type="entry name" value="Scorpion_toxinS_K_inh"/>
</dbReference>
<dbReference type="Pfam" id="PF00451">
    <property type="entry name" value="Toxin_2"/>
    <property type="match status" value="1"/>
</dbReference>
<dbReference type="SUPFAM" id="SSF57095">
    <property type="entry name" value="Scorpion toxin-like"/>
    <property type="match status" value="1"/>
</dbReference>
<dbReference type="PROSITE" id="PS01138">
    <property type="entry name" value="SCORP_SHORT_TOXIN"/>
    <property type="match status" value="1"/>
</dbReference>
<name>KAX55_HOTTA</name>
<evidence type="ECO:0000250" key="1">
    <source>
        <dbReference type="UniProtKB" id="P16341"/>
    </source>
</evidence>
<evidence type="ECO:0000269" key="2">
    <source>
    </source>
</evidence>
<evidence type="ECO:0000305" key="3"/>
<evidence type="ECO:0000305" key="4">
    <source>
    </source>
</evidence>
<organism>
    <name type="scientific">Hottentotta tamulus</name>
    <name type="common">Eastern Indian scorpion</name>
    <name type="synonym">Mesobuthus tamulus</name>
    <dbReference type="NCBI Taxonomy" id="34647"/>
    <lineage>
        <taxon>Eukaryota</taxon>
        <taxon>Metazoa</taxon>
        <taxon>Ecdysozoa</taxon>
        <taxon>Arthropoda</taxon>
        <taxon>Chelicerata</taxon>
        <taxon>Arachnida</taxon>
        <taxon>Scorpiones</taxon>
        <taxon>Buthida</taxon>
        <taxon>Buthoidea</taxon>
        <taxon>Buthidae</taxon>
        <taxon>Mesobuthus</taxon>
    </lineage>
</organism>
<accession>P59870</accession>
<comment type="function">
    <text evidence="2">Blocks small conductance calcium-activated potassium channels.</text>
</comment>
<comment type="subcellular location">
    <subcellularLocation>
        <location>Secreted</location>
    </subcellularLocation>
</comment>
<comment type="tissue specificity">
    <text>Expressed by the venom gland.</text>
</comment>
<comment type="domain">
    <text evidence="3">Has the structural arrangement of an alpha-helix connected to antiparallel beta-sheets by disulfide bonds (CS-alpha/beta).</text>
</comment>
<comment type="mass spectrometry" mass="3431.4" error="0.2" method="Electrospray" evidence="2"/>
<comment type="similarity">
    <text evidence="3">Belongs to the short scorpion toxin superfamily. Potassium channel inhibitor family. Alpha-KTx 05 subfamily.</text>
</comment>
<protein>
    <recommendedName>
        <fullName>Potassium channel toxin alpha-KTx 5.5</fullName>
    </recommendedName>
    <alternativeName>
        <fullName>Tamapin-2</fullName>
    </alternativeName>
</protein>